<protein>
    <recommendedName>
        <fullName evidence="1">tRNA (guanine-N(1)-)-methyltransferase</fullName>
        <ecNumber evidence="1">2.1.1.228</ecNumber>
    </recommendedName>
    <alternativeName>
        <fullName evidence="1">M1G-methyltransferase</fullName>
    </alternativeName>
    <alternativeName>
        <fullName evidence="1">tRNA [GM37] methyltransferase</fullName>
    </alternativeName>
</protein>
<accession>C4K1C8</accession>
<proteinExistence type="inferred from homology"/>
<evidence type="ECO:0000255" key="1">
    <source>
        <dbReference type="HAMAP-Rule" id="MF_00605"/>
    </source>
</evidence>
<feature type="chain" id="PRO_1000212233" description="tRNA (guanine-N(1)-)-methyltransferase">
    <location>
        <begin position="1"/>
        <end position="234"/>
    </location>
</feature>
<feature type="binding site" evidence="1">
    <location>
        <position position="115"/>
    </location>
    <ligand>
        <name>S-adenosyl-L-methionine</name>
        <dbReference type="ChEBI" id="CHEBI:59789"/>
    </ligand>
</feature>
<feature type="binding site" evidence="1">
    <location>
        <begin position="135"/>
        <end position="140"/>
    </location>
    <ligand>
        <name>S-adenosyl-L-methionine</name>
        <dbReference type="ChEBI" id="CHEBI:59789"/>
    </ligand>
</feature>
<comment type="function">
    <text evidence="1">Specifically methylates guanosine-37 in various tRNAs.</text>
</comment>
<comment type="catalytic activity">
    <reaction evidence="1">
        <text>guanosine(37) in tRNA + S-adenosyl-L-methionine = N(1)-methylguanosine(37) in tRNA + S-adenosyl-L-homocysteine + H(+)</text>
        <dbReference type="Rhea" id="RHEA:36899"/>
        <dbReference type="Rhea" id="RHEA-COMP:10145"/>
        <dbReference type="Rhea" id="RHEA-COMP:10147"/>
        <dbReference type="ChEBI" id="CHEBI:15378"/>
        <dbReference type="ChEBI" id="CHEBI:57856"/>
        <dbReference type="ChEBI" id="CHEBI:59789"/>
        <dbReference type="ChEBI" id="CHEBI:73542"/>
        <dbReference type="ChEBI" id="CHEBI:74269"/>
        <dbReference type="EC" id="2.1.1.228"/>
    </reaction>
</comment>
<comment type="subunit">
    <text evidence="1">Homodimer.</text>
</comment>
<comment type="subcellular location">
    <subcellularLocation>
        <location evidence="1">Cytoplasm</location>
    </subcellularLocation>
</comment>
<comment type="similarity">
    <text evidence="1">Belongs to the RNA methyltransferase TrmD family.</text>
</comment>
<organism>
    <name type="scientific">Rickettsia peacockii (strain Rustic)</name>
    <dbReference type="NCBI Taxonomy" id="562019"/>
    <lineage>
        <taxon>Bacteria</taxon>
        <taxon>Pseudomonadati</taxon>
        <taxon>Pseudomonadota</taxon>
        <taxon>Alphaproteobacteria</taxon>
        <taxon>Rickettsiales</taxon>
        <taxon>Rickettsiaceae</taxon>
        <taxon>Rickettsieae</taxon>
        <taxon>Rickettsia</taxon>
        <taxon>spotted fever group</taxon>
    </lineage>
</organism>
<name>TRMD_RICPU</name>
<sequence>MSILHATILTVFPEMFPGTLGHSLAGQALNKNIWSYDVINIRDFGLTKHKNIDDEAYGGGNGLIMRPDVLGSSIDHALALNPNAEMYYPSPRGRVFTQSFAKEMLKNKNLIFLCGRYEGIDERVIEEYNVKEISVGDYILSGGEMPTLTILDCLIRLLPGVLMNQNTLSSESFEEDGEFKGGLECSLYTRPEIWRDRAVPSVLLSGNHRLINEWKKEQSHMITKLRRPELLKDL</sequence>
<reference key="1">
    <citation type="journal article" date="2009" name="PLoS ONE">
        <title>Genome sequence of the endosymbiont Rickettsia peacockii and comparison with virulent Rickettsia rickettsii: identification of virulence factors.</title>
        <authorList>
            <person name="Felsheim R.F."/>
            <person name="Kurtti T.J."/>
            <person name="Munderloh U.G."/>
        </authorList>
    </citation>
    <scope>NUCLEOTIDE SEQUENCE [LARGE SCALE GENOMIC DNA]</scope>
    <source>
        <strain>Rustic</strain>
    </source>
</reference>
<keyword id="KW-0963">Cytoplasm</keyword>
<keyword id="KW-0489">Methyltransferase</keyword>
<keyword id="KW-0949">S-adenosyl-L-methionine</keyword>
<keyword id="KW-0808">Transferase</keyword>
<keyword id="KW-0819">tRNA processing</keyword>
<gene>
    <name evidence="1" type="primary">trmD</name>
    <name type="ordered locus">RPR_02885</name>
</gene>
<dbReference type="EC" id="2.1.1.228" evidence="1"/>
<dbReference type="EMBL" id="CP001227">
    <property type="protein sequence ID" value="ACR47379.1"/>
    <property type="molecule type" value="Genomic_DNA"/>
</dbReference>
<dbReference type="RefSeq" id="WP_012736632.1">
    <property type="nucleotide sequence ID" value="NC_012730.1"/>
</dbReference>
<dbReference type="SMR" id="C4K1C8"/>
<dbReference type="KEGG" id="rpk:RPR_02885"/>
<dbReference type="HOGENOM" id="CLU_047363_0_1_5"/>
<dbReference type="Proteomes" id="UP000005015">
    <property type="component" value="Chromosome"/>
</dbReference>
<dbReference type="GO" id="GO:0005829">
    <property type="term" value="C:cytosol"/>
    <property type="evidence" value="ECO:0007669"/>
    <property type="project" value="TreeGrafter"/>
</dbReference>
<dbReference type="GO" id="GO:0052906">
    <property type="term" value="F:tRNA (guanine(37)-N1)-methyltransferase activity"/>
    <property type="evidence" value="ECO:0007669"/>
    <property type="project" value="UniProtKB-UniRule"/>
</dbReference>
<dbReference type="GO" id="GO:0002939">
    <property type="term" value="P:tRNA N1-guanine methylation"/>
    <property type="evidence" value="ECO:0007669"/>
    <property type="project" value="TreeGrafter"/>
</dbReference>
<dbReference type="CDD" id="cd18080">
    <property type="entry name" value="TrmD-like"/>
    <property type="match status" value="1"/>
</dbReference>
<dbReference type="Gene3D" id="3.40.1280.10">
    <property type="match status" value="1"/>
</dbReference>
<dbReference type="Gene3D" id="1.10.1270.20">
    <property type="entry name" value="tRNA(m1g37)methyltransferase, domain 2"/>
    <property type="match status" value="1"/>
</dbReference>
<dbReference type="HAMAP" id="MF_00605">
    <property type="entry name" value="TrmD"/>
    <property type="match status" value="1"/>
</dbReference>
<dbReference type="InterPro" id="IPR029028">
    <property type="entry name" value="Alpha/beta_knot_MTases"/>
</dbReference>
<dbReference type="InterPro" id="IPR023148">
    <property type="entry name" value="tRNA_m1G_MeTrfase_C_sf"/>
</dbReference>
<dbReference type="InterPro" id="IPR002649">
    <property type="entry name" value="tRNA_m1G_MeTrfase_TrmD"/>
</dbReference>
<dbReference type="InterPro" id="IPR029026">
    <property type="entry name" value="tRNA_m1G_MTases_N"/>
</dbReference>
<dbReference type="InterPro" id="IPR016009">
    <property type="entry name" value="tRNA_MeTrfase_TRMD/TRM10"/>
</dbReference>
<dbReference type="NCBIfam" id="NF000648">
    <property type="entry name" value="PRK00026.1"/>
    <property type="match status" value="1"/>
</dbReference>
<dbReference type="NCBIfam" id="TIGR00088">
    <property type="entry name" value="trmD"/>
    <property type="match status" value="1"/>
</dbReference>
<dbReference type="PANTHER" id="PTHR46417">
    <property type="entry name" value="TRNA (GUANINE-N(1)-)-METHYLTRANSFERASE"/>
    <property type="match status" value="1"/>
</dbReference>
<dbReference type="PANTHER" id="PTHR46417:SF1">
    <property type="entry name" value="TRNA (GUANINE-N(1)-)-METHYLTRANSFERASE"/>
    <property type="match status" value="1"/>
</dbReference>
<dbReference type="Pfam" id="PF01746">
    <property type="entry name" value="tRNA_m1G_MT"/>
    <property type="match status" value="1"/>
</dbReference>
<dbReference type="PIRSF" id="PIRSF000386">
    <property type="entry name" value="tRNA_mtase"/>
    <property type="match status" value="1"/>
</dbReference>
<dbReference type="SUPFAM" id="SSF75217">
    <property type="entry name" value="alpha/beta knot"/>
    <property type="match status" value="1"/>
</dbReference>